<protein>
    <recommendedName>
        <fullName evidence="1">Protein Aster-C</fullName>
    </recommendedName>
    <alternativeName>
        <fullName>GRAM domain-containing protein 1C</fullName>
    </alternativeName>
</protein>
<feature type="chain" id="PRO_0000287451" description="Protein Aster-C">
    <location>
        <begin position="1"/>
        <end position="662"/>
    </location>
</feature>
<feature type="transmembrane region" description="Helical" evidence="2">
    <location>
        <begin position="557"/>
        <end position="577"/>
    </location>
</feature>
<feature type="domain" description="GRAM" evidence="2">
    <location>
        <begin position="69"/>
        <end position="136"/>
    </location>
</feature>
<feature type="domain" description="VASt" evidence="3">
    <location>
        <begin position="326"/>
        <end position="497"/>
    </location>
</feature>
<feature type="region of interest" description="Disordered" evidence="4">
    <location>
        <begin position="1"/>
        <end position="34"/>
    </location>
</feature>
<feature type="region of interest" description="Disordered" evidence="4">
    <location>
        <begin position="212"/>
        <end position="237"/>
    </location>
</feature>
<feature type="region of interest" description="Disordered" evidence="4">
    <location>
        <begin position="249"/>
        <end position="284"/>
    </location>
</feature>
<feature type="compositionally biased region" description="Basic and acidic residues" evidence="4">
    <location>
        <begin position="265"/>
        <end position="276"/>
    </location>
</feature>
<feature type="splice variant" id="VSP_025477" description="In isoform 2." evidence="6 7">
    <location>
        <begin position="1"/>
        <end position="205"/>
    </location>
</feature>
<feature type="sequence variant" id="VAR_032302" description="In dbSNP:rs17853381." evidence="5">
    <original>L</original>
    <variation>P</variation>
    <location>
        <position position="644"/>
    </location>
</feature>
<feature type="sequence conflict" description="In Ref. 4; AAH28972." evidence="8" ref="4">
    <original>PGKL</original>
    <variation>AVHH</variation>
    <location>
        <begin position="503"/>
        <end position="506"/>
    </location>
</feature>
<feature type="strand" evidence="9">
    <location>
        <begin position="325"/>
        <end position="337"/>
    </location>
</feature>
<feature type="helix" evidence="9">
    <location>
        <begin position="339"/>
        <end position="347"/>
    </location>
</feature>
<feature type="helix" evidence="9">
    <location>
        <begin position="351"/>
        <end position="359"/>
    </location>
</feature>
<feature type="strand" evidence="9">
    <location>
        <begin position="362"/>
        <end position="367"/>
    </location>
</feature>
<feature type="strand" evidence="9">
    <location>
        <begin position="378"/>
        <end position="390"/>
    </location>
</feature>
<feature type="turn" evidence="9">
    <location>
        <begin position="391"/>
        <end position="393"/>
    </location>
</feature>
<feature type="strand" evidence="9">
    <location>
        <begin position="394"/>
        <end position="405"/>
    </location>
</feature>
<feature type="turn" evidence="9">
    <location>
        <begin position="411"/>
        <end position="413"/>
    </location>
</feature>
<feature type="strand" evidence="9">
    <location>
        <begin position="414"/>
        <end position="426"/>
    </location>
</feature>
<feature type="turn" evidence="9">
    <location>
        <begin position="427"/>
        <end position="431"/>
    </location>
</feature>
<feature type="strand" evidence="9">
    <location>
        <begin position="432"/>
        <end position="444"/>
    </location>
</feature>
<feature type="strand" evidence="9">
    <location>
        <begin position="447"/>
        <end position="460"/>
    </location>
</feature>
<feature type="helix" evidence="9">
    <location>
        <begin position="464"/>
        <end position="498"/>
    </location>
</feature>
<proteinExistence type="evidence at protein level"/>
<dbReference type="EMBL" id="AY358725">
    <property type="protein sequence ID" value="AAQ89087.1"/>
    <property type="molecule type" value="mRNA"/>
</dbReference>
<dbReference type="EMBL" id="AK292846">
    <property type="protein sequence ID" value="BAF85535.1"/>
    <property type="molecule type" value="mRNA"/>
</dbReference>
<dbReference type="EMBL" id="AK292964">
    <property type="protein sequence ID" value="BAF85653.1"/>
    <property type="molecule type" value="mRNA"/>
</dbReference>
<dbReference type="EMBL" id="AK304142">
    <property type="protein sequence ID" value="BAH14115.1"/>
    <property type="molecule type" value="mRNA"/>
</dbReference>
<dbReference type="EMBL" id="CH471052">
    <property type="protein sequence ID" value="EAW79621.1"/>
    <property type="molecule type" value="Genomic_DNA"/>
</dbReference>
<dbReference type="EMBL" id="CH471052">
    <property type="protein sequence ID" value="EAW79622.1"/>
    <property type="molecule type" value="Genomic_DNA"/>
</dbReference>
<dbReference type="EMBL" id="BC028972">
    <property type="protein sequence ID" value="AAH28972.1"/>
    <property type="status" value="ALT_INIT"/>
    <property type="molecule type" value="mRNA"/>
</dbReference>
<dbReference type="EMBL" id="BC035040">
    <property type="protein sequence ID" value="AAH35040.1"/>
    <property type="molecule type" value="mRNA"/>
</dbReference>
<dbReference type="EMBL" id="AL133661">
    <property type="protein sequence ID" value="CAB63774.2"/>
    <property type="molecule type" value="mRNA"/>
</dbReference>
<dbReference type="EMBL" id="BX648633">
    <property type="protein sequence ID" value="CAH10770.1"/>
    <property type="molecule type" value="mRNA"/>
</dbReference>
<dbReference type="CCDS" id="CCDS33826.1">
    <molecule id="Q8IYS0-1"/>
</dbReference>
<dbReference type="CCDS" id="CCDS54625.1">
    <molecule id="Q8IYS0-2"/>
</dbReference>
<dbReference type="PIR" id="T43471">
    <property type="entry name" value="T43471"/>
</dbReference>
<dbReference type="RefSeq" id="NP_001165576.1">
    <molecule id="Q8IYS0-2"/>
    <property type="nucleotide sequence ID" value="NM_001172105.2"/>
</dbReference>
<dbReference type="RefSeq" id="NP_060047.3">
    <molecule id="Q8IYS0-1"/>
    <property type="nucleotide sequence ID" value="NM_017577.5"/>
</dbReference>
<dbReference type="RefSeq" id="XP_011511233.1">
    <molecule id="Q8IYS0-2"/>
    <property type="nucleotide sequence ID" value="XM_011512931.2"/>
</dbReference>
<dbReference type="RefSeq" id="XP_054202932.1">
    <molecule id="Q8IYS0-2"/>
    <property type="nucleotide sequence ID" value="XM_054346957.1"/>
</dbReference>
<dbReference type="PDB" id="6GN5">
    <property type="method" value="X-ray"/>
    <property type="resolution" value="1.41 A"/>
    <property type="chains" value="A=318-504"/>
</dbReference>
<dbReference type="PDBsum" id="6GN5"/>
<dbReference type="SMR" id="Q8IYS0"/>
<dbReference type="BioGRID" id="120137">
    <property type="interactions" value="23"/>
</dbReference>
<dbReference type="FunCoup" id="Q8IYS0">
    <property type="interactions" value="795"/>
</dbReference>
<dbReference type="IntAct" id="Q8IYS0">
    <property type="interactions" value="17"/>
</dbReference>
<dbReference type="MINT" id="Q8IYS0"/>
<dbReference type="STRING" id="9606.ENSP00000350881"/>
<dbReference type="TCDB" id="9.B.198.2.7">
    <property type="family name" value="the membrane-anchored lipid-binding protein (lam) family"/>
</dbReference>
<dbReference type="GlyGen" id="Q8IYS0">
    <property type="glycosylation" value="1 site"/>
</dbReference>
<dbReference type="iPTMnet" id="Q8IYS0"/>
<dbReference type="PhosphoSitePlus" id="Q8IYS0"/>
<dbReference type="BioMuta" id="GRAMD1C"/>
<dbReference type="DMDM" id="147645434"/>
<dbReference type="jPOST" id="Q8IYS0"/>
<dbReference type="MassIVE" id="Q8IYS0"/>
<dbReference type="PaxDb" id="9606-ENSP00000350881"/>
<dbReference type="PeptideAtlas" id="Q8IYS0"/>
<dbReference type="ProteomicsDB" id="71218">
    <molecule id="Q8IYS0-1"/>
</dbReference>
<dbReference type="ProteomicsDB" id="71219">
    <molecule id="Q8IYS0-2"/>
</dbReference>
<dbReference type="Pumba" id="Q8IYS0"/>
<dbReference type="Antibodypedia" id="2647">
    <property type="antibodies" value="9 antibodies from 7 providers"/>
</dbReference>
<dbReference type="DNASU" id="54762"/>
<dbReference type="Ensembl" id="ENST00000358160.9">
    <molecule id="Q8IYS0-1"/>
    <property type="protein sequence ID" value="ENSP00000350881.4"/>
    <property type="gene ID" value="ENSG00000178075.20"/>
</dbReference>
<dbReference type="Ensembl" id="ENST00000440446.2">
    <molecule id="Q8IYS0-2"/>
    <property type="protein sequence ID" value="ENSP00000408135.2"/>
    <property type="gene ID" value="ENSG00000178075.20"/>
</dbReference>
<dbReference type="GeneID" id="54762"/>
<dbReference type="KEGG" id="hsa:54762"/>
<dbReference type="MANE-Select" id="ENST00000358160.9">
    <property type="protein sequence ID" value="ENSP00000350881.4"/>
    <property type="RefSeq nucleotide sequence ID" value="NM_017577.5"/>
    <property type="RefSeq protein sequence ID" value="NP_060047.3"/>
</dbReference>
<dbReference type="UCSC" id="uc003eaq.5">
    <molecule id="Q8IYS0-1"/>
    <property type="organism name" value="human"/>
</dbReference>
<dbReference type="AGR" id="HGNC:25252"/>
<dbReference type="CTD" id="54762"/>
<dbReference type="DisGeNET" id="54762"/>
<dbReference type="GeneCards" id="GRAMD1C"/>
<dbReference type="HGNC" id="HGNC:25252">
    <property type="gene designation" value="GRAMD1C"/>
</dbReference>
<dbReference type="HPA" id="ENSG00000178075">
    <property type="expression patterns" value="Low tissue specificity"/>
</dbReference>
<dbReference type="MIM" id="620180">
    <property type="type" value="gene"/>
</dbReference>
<dbReference type="neXtProt" id="NX_Q8IYS0"/>
<dbReference type="OpenTargets" id="ENSG00000178075"/>
<dbReference type="PharmGKB" id="PA142671709"/>
<dbReference type="VEuPathDB" id="HostDB:ENSG00000178075"/>
<dbReference type="eggNOG" id="KOG1032">
    <property type="taxonomic scope" value="Eukaryota"/>
</dbReference>
<dbReference type="GeneTree" id="ENSGT00940000158013"/>
<dbReference type="HOGENOM" id="CLU_015189_2_0_1"/>
<dbReference type="InParanoid" id="Q8IYS0"/>
<dbReference type="OMA" id="HISANKM"/>
<dbReference type="OrthoDB" id="2162691at2759"/>
<dbReference type="PAN-GO" id="Q8IYS0">
    <property type="GO annotations" value="6 GO annotations based on evolutionary models"/>
</dbReference>
<dbReference type="PhylomeDB" id="Q8IYS0"/>
<dbReference type="TreeFam" id="TF327695"/>
<dbReference type="PathwayCommons" id="Q8IYS0"/>
<dbReference type="SignaLink" id="Q8IYS0"/>
<dbReference type="BioGRID-ORCS" id="54762">
    <property type="hits" value="15 hits in 1149 CRISPR screens"/>
</dbReference>
<dbReference type="ChiTaRS" id="GRAMD1C">
    <property type="organism name" value="human"/>
</dbReference>
<dbReference type="GenomeRNAi" id="54762"/>
<dbReference type="Pharos" id="Q8IYS0">
    <property type="development level" value="Tdark"/>
</dbReference>
<dbReference type="PRO" id="PR:Q8IYS0"/>
<dbReference type="Proteomes" id="UP000005640">
    <property type="component" value="Chromosome 3"/>
</dbReference>
<dbReference type="RNAct" id="Q8IYS0">
    <property type="molecule type" value="protein"/>
</dbReference>
<dbReference type="Bgee" id="ENSG00000178075">
    <property type="expression patterns" value="Expressed in jejunal mucosa and 176 other cell types or tissues"/>
</dbReference>
<dbReference type="ExpressionAtlas" id="Q8IYS0">
    <property type="expression patterns" value="baseline and differential"/>
</dbReference>
<dbReference type="GO" id="GO:0005789">
    <property type="term" value="C:endoplasmic reticulum membrane"/>
    <property type="evidence" value="ECO:0000250"/>
    <property type="project" value="UniProtKB"/>
</dbReference>
<dbReference type="GO" id="GO:0140268">
    <property type="term" value="C:endoplasmic reticulum-plasma membrane contact site"/>
    <property type="evidence" value="ECO:0000250"/>
    <property type="project" value="UniProtKB"/>
</dbReference>
<dbReference type="GO" id="GO:0005886">
    <property type="term" value="C:plasma membrane"/>
    <property type="evidence" value="ECO:0000250"/>
    <property type="project" value="UniProtKB"/>
</dbReference>
<dbReference type="GO" id="GO:0015485">
    <property type="term" value="F:cholesterol binding"/>
    <property type="evidence" value="ECO:0000250"/>
    <property type="project" value="UniProtKB"/>
</dbReference>
<dbReference type="GO" id="GO:0120020">
    <property type="term" value="F:cholesterol transfer activity"/>
    <property type="evidence" value="ECO:0000250"/>
    <property type="project" value="UniProtKB"/>
</dbReference>
<dbReference type="GO" id="GO:0071397">
    <property type="term" value="P:cellular response to cholesterol"/>
    <property type="evidence" value="ECO:0000250"/>
    <property type="project" value="UniProtKB"/>
</dbReference>
<dbReference type="GO" id="GO:0032366">
    <property type="term" value="P:intracellular sterol transport"/>
    <property type="evidence" value="ECO:0000318"/>
    <property type="project" value="GO_Central"/>
</dbReference>
<dbReference type="CDD" id="cd13220">
    <property type="entry name" value="PH-GRAM_GRAMDC"/>
    <property type="match status" value="1"/>
</dbReference>
<dbReference type="FunFam" id="2.30.29.30:FF:000008">
    <property type="entry name" value="GRAM domain containing 1B"/>
    <property type="match status" value="1"/>
</dbReference>
<dbReference type="Gene3D" id="2.30.29.30">
    <property type="entry name" value="Pleckstrin-homology domain (PH domain)/Phosphotyrosine-binding domain (PTB)"/>
    <property type="match status" value="1"/>
</dbReference>
<dbReference type="InterPro" id="IPR051482">
    <property type="entry name" value="Cholesterol_transport"/>
</dbReference>
<dbReference type="InterPro" id="IPR004182">
    <property type="entry name" value="GRAM"/>
</dbReference>
<dbReference type="InterPro" id="IPR011993">
    <property type="entry name" value="PH-like_dom_sf"/>
</dbReference>
<dbReference type="InterPro" id="IPR031968">
    <property type="entry name" value="VASt"/>
</dbReference>
<dbReference type="PANTHER" id="PTHR23319">
    <property type="entry name" value="GRAM DOMAIN CONTAINING 1B, ISOFORM E"/>
    <property type="match status" value="1"/>
</dbReference>
<dbReference type="PANTHER" id="PTHR23319:SF1">
    <property type="entry name" value="PROTEIN ASTER-C"/>
    <property type="match status" value="1"/>
</dbReference>
<dbReference type="Pfam" id="PF02893">
    <property type="entry name" value="GRAM"/>
    <property type="match status" value="1"/>
</dbReference>
<dbReference type="Pfam" id="PF16016">
    <property type="entry name" value="VASt"/>
    <property type="match status" value="1"/>
</dbReference>
<dbReference type="SMART" id="SM00568">
    <property type="entry name" value="GRAM"/>
    <property type="match status" value="1"/>
</dbReference>
<dbReference type="PROSITE" id="PS51778">
    <property type="entry name" value="VAST"/>
    <property type="match status" value="1"/>
</dbReference>
<evidence type="ECO:0000250" key="1">
    <source>
        <dbReference type="UniProtKB" id="Q8CI52"/>
    </source>
</evidence>
<evidence type="ECO:0000255" key="2"/>
<evidence type="ECO:0000255" key="3">
    <source>
        <dbReference type="PROSITE-ProRule" id="PRU01114"/>
    </source>
</evidence>
<evidence type="ECO:0000256" key="4">
    <source>
        <dbReference type="SAM" id="MobiDB-lite"/>
    </source>
</evidence>
<evidence type="ECO:0000269" key="5">
    <source>
    </source>
</evidence>
<evidence type="ECO:0000303" key="6">
    <source>
    </source>
</evidence>
<evidence type="ECO:0000303" key="7">
    <source>
    </source>
</evidence>
<evidence type="ECO:0000305" key="8"/>
<evidence type="ECO:0007829" key="9">
    <source>
        <dbReference type="PDB" id="6GN5"/>
    </source>
</evidence>
<organism>
    <name type="scientific">Homo sapiens</name>
    <name type="common">Human</name>
    <dbReference type="NCBI Taxonomy" id="9606"/>
    <lineage>
        <taxon>Eukaryota</taxon>
        <taxon>Metazoa</taxon>
        <taxon>Chordata</taxon>
        <taxon>Craniata</taxon>
        <taxon>Vertebrata</taxon>
        <taxon>Euteleostomi</taxon>
        <taxon>Mammalia</taxon>
        <taxon>Eutheria</taxon>
        <taxon>Euarchontoglires</taxon>
        <taxon>Primates</taxon>
        <taxon>Haplorrhini</taxon>
        <taxon>Catarrhini</taxon>
        <taxon>Hominidae</taxon>
        <taxon>Homo</taxon>
    </lineage>
</organism>
<sequence length="662" mass="76035">MEGAPTVRQVMNEGDSSLATDLQEDVEENPSPTVEENNVVVKKQGPNLHNWSGDWSFWISSSTYKDRNEEYRRQFTHLPDTERLIADYACALQRDILLQGRLYLSENWLCFYSNIFRWETTISIALKNITFMTKEKTARLIPNAIQIVTESEKFFFTSFGARDRSYLSIFRLWQNVLLDKSLTRQEFWQLLQQNYGTELGLNAEEMENLSLSIEDVQPRSPGRSSLDDSGERDEKLSKSISFTSESISRVSETESFDGNSSKGGLGKEESQNEKQTKKSLLPTLEKKLTRVPSKSLDLNKNEYLSLDKSSTSDSVDEENVPEKDLHGRLFINRIFHISADRMFELLFTSSRFMQKFASSRNIIDVVSTPWTAELGGDQLRTMTYTIVLNSPLTGKCTAATEKQTLYKESREARFYLVDSEVLTHDVPYHDYFYTVNRYCIIRSSKQKCRLRVSTDLKYRKQPWGLVKSLIEKNSWSSLEDYFKQLESDLLIEESVLNQAIEDPGKLTGLRRRRRTFNRTAETVPKLSSQHSSGDVGLGAKGDITGKKKEMENYNVTLIVVMSIFVLLLVLLNVTLFLKLSKIEHAAQSFYRLRLQEEKSLNLASDMVSRAETIQKNKDQAHRLKGVLRDSIVMLEQLKSSLIMLQKTFDLLNKNKTGMAVES</sequence>
<accession>Q8IYS0</accession>
<accession>A8K9Y1</accession>
<accession>A8KA99</accession>
<accession>Q6AW94</accession>
<accession>Q6UWN1</accession>
<accession>Q8N6S0</accession>
<accession>Q9UF46</accession>
<name>ASTRC_HUMAN</name>
<comment type="function">
    <text evidence="1">Cholesterol transporter that mediates non-vesicular transport of cholesterol from the plasma membrane (PM) to the endoplasmic reticulum (ER) (By similarity). Contains unique domains for binding cholesterol and the PM, thereby serving as a molecular bridge for the transfer of cholesterol from the PM to the ER (By similarity). Plays a crucial role in cholesterol homeostasis and has the unique ability to localize to the PM based on the level of membrane cholesterol (By similarity). In lipid-poor conditions localizes to the ER membrane and in response to excess cholesterol in the PM is recruited to the endoplasmic reticulum-plasma membrane contact sites (EPCS) which is mediated by the GRAM domain (By similarity). At the EPCS, the sterol-binding VASt/ASTER domain binds to the cholesterol in the PM and facilitates its transfer from the PM to ER (By similarity).</text>
</comment>
<comment type="interaction">
    <interactant intactId="EBI-7054335">
        <id>Q8IYS0</id>
    </interactant>
    <interactant intactId="EBI-10210332">
        <id>P48509</id>
        <label>CD151</label>
    </interactant>
    <organismsDiffer>false</organismsDiffer>
    <experiments>11</experiments>
</comment>
<comment type="interaction">
    <interactant intactId="EBI-7054335">
        <id>Q8IYS0</id>
    </interactant>
    <interactant intactId="EBI-307924">
        <id>P21854</id>
        <label>CD72</label>
    </interactant>
    <organismsDiffer>false</organismsDiffer>
    <experiments>3</experiments>
</comment>
<comment type="subcellular location">
    <subcellularLocation>
        <location evidence="1">Endoplasmic reticulum membrane</location>
        <topology evidence="2">Single-pass membrane protein</topology>
    </subcellularLocation>
    <subcellularLocation>
        <location evidence="1">Cell membrane</location>
        <topology evidence="2">Single-pass membrane protein</topology>
    </subcellularLocation>
    <text evidence="1">In lipid-poor conditions localizes to the ER membrane and in response to excess cholesterol in the PM is recruited to the endoplasmic reticulum-plasma membrane contact sites (EPCS).</text>
</comment>
<comment type="alternative products">
    <event type="alternative splicing"/>
    <isoform>
        <id>Q8IYS0-1</id>
        <name>1</name>
        <sequence type="displayed"/>
    </isoform>
    <isoform>
        <id>Q8IYS0-2</id>
        <name>2</name>
        <sequence type="described" ref="VSP_025477"/>
    </isoform>
</comment>
<comment type="domain">
    <text evidence="1">GRAM domain binds phosphatidylserine in the PM and mediates protein recruitment to endoplasmic reticulum-plasma membrane contact sites (EPCS) in response to excess cholesterol in the PM.</text>
</comment>
<comment type="domain">
    <text evidence="1">VASt (VAD1 Analog of StAR-related lipid transfer) domain, also known as ASTER (Greek for star) domain is a sterol-binding domain.</text>
</comment>
<comment type="sequence caution" evidence="8">
    <conflict type="erroneous initiation">
        <sequence resource="EMBL-CDS" id="AAH28972"/>
    </conflict>
</comment>
<reference key="1">
    <citation type="journal article" date="2003" name="Genome Res.">
        <title>The secreted protein discovery initiative (SPDI), a large-scale effort to identify novel human secreted and transmembrane proteins: a bioinformatics assessment.</title>
        <authorList>
            <person name="Clark H.F."/>
            <person name="Gurney A.L."/>
            <person name="Abaya E."/>
            <person name="Baker K."/>
            <person name="Baldwin D.T."/>
            <person name="Brush J."/>
            <person name="Chen J."/>
            <person name="Chow B."/>
            <person name="Chui C."/>
            <person name="Crowley C."/>
            <person name="Currell B."/>
            <person name="Deuel B."/>
            <person name="Dowd P."/>
            <person name="Eaton D."/>
            <person name="Foster J.S."/>
            <person name="Grimaldi C."/>
            <person name="Gu Q."/>
            <person name="Hass P.E."/>
            <person name="Heldens S."/>
            <person name="Huang A."/>
            <person name="Kim H.S."/>
            <person name="Klimowski L."/>
            <person name="Jin Y."/>
            <person name="Johnson S."/>
            <person name="Lee J."/>
            <person name="Lewis L."/>
            <person name="Liao D."/>
            <person name="Mark M.R."/>
            <person name="Robbie E."/>
            <person name="Sanchez C."/>
            <person name="Schoenfeld J."/>
            <person name="Seshagiri S."/>
            <person name="Simmons L."/>
            <person name="Singh J."/>
            <person name="Smith V."/>
            <person name="Stinson J."/>
            <person name="Vagts A."/>
            <person name="Vandlen R.L."/>
            <person name="Watanabe C."/>
            <person name="Wieand D."/>
            <person name="Woods K."/>
            <person name="Xie M.-H."/>
            <person name="Yansura D.G."/>
            <person name="Yi S."/>
            <person name="Yu G."/>
            <person name="Yuan J."/>
            <person name="Zhang M."/>
            <person name="Zhang Z."/>
            <person name="Goddard A.D."/>
            <person name="Wood W.I."/>
            <person name="Godowski P.J."/>
            <person name="Gray A.M."/>
        </authorList>
    </citation>
    <scope>NUCLEOTIDE SEQUENCE [LARGE SCALE MRNA] (ISOFORM 2)</scope>
    <scope>VARIANT PRO-644</scope>
</reference>
<reference key="2">
    <citation type="journal article" date="2004" name="Nat. Genet.">
        <title>Complete sequencing and characterization of 21,243 full-length human cDNAs.</title>
        <authorList>
            <person name="Ota T."/>
            <person name="Suzuki Y."/>
            <person name="Nishikawa T."/>
            <person name="Otsuki T."/>
            <person name="Sugiyama T."/>
            <person name="Irie R."/>
            <person name="Wakamatsu A."/>
            <person name="Hayashi K."/>
            <person name="Sato H."/>
            <person name="Nagai K."/>
            <person name="Kimura K."/>
            <person name="Makita H."/>
            <person name="Sekine M."/>
            <person name="Obayashi M."/>
            <person name="Nishi T."/>
            <person name="Shibahara T."/>
            <person name="Tanaka T."/>
            <person name="Ishii S."/>
            <person name="Yamamoto J."/>
            <person name="Saito K."/>
            <person name="Kawai Y."/>
            <person name="Isono Y."/>
            <person name="Nakamura Y."/>
            <person name="Nagahari K."/>
            <person name="Murakami K."/>
            <person name="Yasuda T."/>
            <person name="Iwayanagi T."/>
            <person name="Wagatsuma M."/>
            <person name="Shiratori A."/>
            <person name="Sudo H."/>
            <person name="Hosoiri T."/>
            <person name="Kaku Y."/>
            <person name="Kodaira H."/>
            <person name="Kondo H."/>
            <person name="Sugawara M."/>
            <person name="Takahashi M."/>
            <person name="Kanda K."/>
            <person name="Yokoi T."/>
            <person name="Furuya T."/>
            <person name="Kikkawa E."/>
            <person name="Omura Y."/>
            <person name="Abe K."/>
            <person name="Kamihara K."/>
            <person name="Katsuta N."/>
            <person name="Sato K."/>
            <person name="Tanikawa M."/>
            <person name="Yamazaki M."/>
            <person name="Ninomiya K."/>
            <person name="Ishibashi T."/>
            <person name="Yamashita H."/>
            <person name="Murakawa K."/>
            <person name="Fujimori K."/>
            <person name="Tanai H."/>
            <person name="Kimata M."/>
            <person name="Watanabe M."/>
            <person name="Hiraoka S."/>
            <person name="Chiba Y."/>
            <person name="Ishida S."/>
            <person name="Ono Y."/>
            <person name="Takiguchi S."/>
            <person name="Watanabe S."/>
            <person name="Yosida M."/>
            <person name="Hotuta T."/>
            <person name="Kusano J."/>
            <person name="Kanehori K."/>
            <person name="Takahashi-Fujii A."/>
            <person name="Hara H."/>
            <person name="Tanase T.-O."/>
            <person name="Nomura Y."/>
            <person name="Togiya S."/>
            <person name="Komai F."/>
            <person name="Hara R."/>
            <person name="Takeuchi K."/>
            <person name="Arita M."/>
            <person name="Imose N."/>
            <person name="Musashino K."/>
            <person name="Yuuki H."/>
            <person name="Oshima A."/>
            <person name="Sasaki N."/>
            <person name="Aotsuka S."/>
            <person name="Yoshikawa Y."/>
            <person name="Matsunawa H."/>
            <person name="Ichihara T."/>
            <person name="Shiohata N."/>
            <person name="Sano S."/>
            <person name="Moriya S."/>
            <person name="Momiyama H."/>
            <person name="Satoh N."/>
            <person name="Takami S."/>
            <person name="Terashima Y."/>
            <person name="Suzuki O."/>
            <person name="Nakagawa S."/>
            <person name="Senoh A."/>
            <person name="Mizoguchi H."/>
            <person name="Goto Y."/>
            <person name="Shimizu F."/>
            <person name="Wakebe H."/>
            <person name="Hishigaki H."/>
            <person name="Watanabe T."/>
            <person name="Sugiyama A."/>
            <person name="Takemoto M."/>
            <person name="Kawakami B."/>
            <person name="Yamazaki M."/>
            <person name="Watanabe K."/>
            <person name="Kumagai A."/>
            <person name="Itakura S."/>
            <person name="Fukuzumi Y."/>
            <person name="Fujimori Y."/>
            <person name="Komiyama M."/>
            <person name="Tashiro H."/>
            <person name="Tanigami A."/>
            <person name="Fujiwara T."/>
            <person name="Ono T."/>
            <person name="Yamada K."/>
            <person name="Fujii Y."/>
            <person name="Ozaki K."/>
            <person name="Hirao M."/>
            <person name="Ohmori Y."/>
            <person name="Kawabata A."/>
            <person name="Hikiji T."/>
            <person name="Kobatake N."/>
            <person name="Inagaki H."/>
            <person name="Ikema Y."/>
            <person name="Okamoto S."/>
            <person name="Okitani R."/>
            <person name="Kawakami T."/>
            <person name="Noguchi S."/>
            <person name="Itoh T."/>
            <person name="Shigeta K."/>
            <person name="Senba T."/>
            <person name="Matsumura K."/>
            <person name="Nakajima Y."/>
            <person name="Mizuno T."/>
            <person name="Morinaga M."/>
            <person name="Sasaki M."/>
            <person name="Togashi T."/>
            <person name="Oyama M."/>
            <person name="Hata H."/>
            <person name="Watanabe M."/>
            <person name="Komatsu T."/>
            <person name="Mizushima-Sugano J."/>
            <person name="Satoh T."/>
            <person name="Shirai Y."/>
            <person name="Takahashi Y."/>
            <person name="Nakagawa K."/>
            <person name="Okumura K."/>
            <person name="Nagase T."/>
            <person name="Nomura N."/>
            <person name="Kikuchi H."/>
            <person name="Masuho Y."/>
            <person name="Yamashita R."/>
            <person name="Nakai K."/>
            <person name="Yada T."/>
            <person name="Nakamura Y."/>
            <person name="Ohara O."/>
            <person name="Isogai T."/>
            <person name="Sugano S."/>
        </authorList>
    </citation>
    <scope>NUCLEOTIDE SEQUENCE [LARGE SCALE MRNA] (ISOFORMS 1 AND 2)</scope>
    <source>
        <tissue>Trachea</tissue>
    </source>
</reference>
<reference key="3">
    <citation type="submission" date="2005-09" db="EMBL/GenBank/DDBJ databases">
        <authorList>
            <person name="Mural R.J."/>
            <person name="Istrail S."/>
            <person name="Sutton G.G."/>
            <person name="Florea L."/>
            <person name="Halpern A.L."/>
            <person name="Mobarry C.M."/>
            <person name="Lippert R."/>
            <person name="Walenz B."/>
            <person name="Shatkay H."/>
            <person name="Dew I."/>
            <person name="Miller J.R."/>
            <person name="Flanigan M.J."/>
            <person name="Edwards N.J."/>
            <person name="Bolanos R."/>
            <person name="Fasulo D."/>
            <person name="Halldorsson B.V."/>
            <person name="Hannenhalli S."/>
            <person name="Turner R."/>
            <person name="Yooseph S."/>
            <person name="Lu F."/>
            <person name="Nusskern D.R."/>
            <person name="Shue B.C."/>
            <person name="Zheng X.H."/>
            <person name="Zhong F."/>
            <person name="Delcher A.L."/>
            <person name="Huson D.H."/>
            <person name="Kravitz S.A."/>
            <person name="Mouchard L."/>
            <person name="Reinert K."/>
            <person name="Remington K.A."/>
            <person name="Clark A.G."/>
            <person name="Waterman M.S."/>
            <person name="Eichler E.E."/>
            <person name="Adams M.D."/>
            <person name="Hunkapiller M.W."/>
            <person name="Myers E.W."/>
            <person name="Venter J.C."/>
        </authorList>
    </citation>
    <scope>NUCLEOTIDE SEQUENCE [LARGE SCALE GENOMIC DNA]</scope>
</reference>
<reference key="4">
    <citation type="journal article" date="2004" name="Genome Res.">
        <title>The status, quality, and expansion of the NIH full-length cDNA project: the Mammalian Gene Collection (MGC).</title>
        <authorList>
            <consortium name="The MGC Project Team"/>
        </authorList>
    </citation>
    <scope>NUCLEOTIDE SEQUENCE [LARGE SCALE MRNA] (ISOFORM 1)</scope>
    <source>
        <tissue>Placenta</tissue>
        <tissue>Testis</tissue>
    </source>
</reference>
<reference key="5">
    <citation type="journal article" date="2007" name="BMC Genomics">
        <title>The full-ORF clone resource of the German cDNA consortium.</title>
        <authorList>
            <person name="Bechtel S."/>
            <person name="Rosenfelder H."/>
            <person name="Duda A."/>
            <person name="Schmidt C.P."/>
            <person name="Ernst U."/>
            <person name="Wellenreuther R."/>
            <person name="Mehrle A."/>
            <person name="Schuster C."/>
            <person name="Bahr A."/>
            <person name="Bloecker H."/>
            <person name="Heubner D."/>
            <person name="Hoerlein A."/>
            <person name="Michel G."/>
            <person name="Wedler H."/>
            <person name="Koehrer K."/>
            <person name="Ottenwaelder B."/>
            <person name="Poustka A."/>
            <person name="Wiemann S."/>
            <person name="Schupp I."/>
        </authorList>
    </citation>
    <scope>NUCLEOTIDE SEQUENCE [LARGE SCALE MRNA] OF 318-662</scope>
    <source>
        <tissue>Fetal kidney</tissue>
        <tissue>Testis</tissue>
    </source>
</reference>
<reference key="6">
    <citation type="journal article" date="2014" name="J. Proteomics">
        <title>An enzyme assisted RP-RPLC approach for in-depth analysis of human liver phosphoproteome.</title>
        <authorList>
            <person name="Bian Y."/>
            <person name="Song C."/>
            <person name="Cheng K."/>
            <person name="Dong M."/>
            <person name="Wang F."/>
            <person name="Huang J."/>
            <person name="Sun D."/>
            <person name="Wang L."/>
            <person name="Ye M."/>
            <person name="Zou H."/>
        </authorList>
    </citation>
    <scope>IDENTIFICATION BY MASS SPECTROMETRY [LARGE SCALE ANALYSIS]</scope>
    <source>
        <tissue>Liver</tissue>
    </source>
</reference>
<gene>
    <name type="primary">GRAMD1C</name>
    <name type="ORF">UNQ2543/PRO6095</name>
</gene>
<keyword id="KW-0002">3D-structure</keyword>
<keyword id="KW-0025">Alternative splicing</keyword>
<keyword id="KW-1003">Cell membrane</keyword>
<keyword id="KW-0256">Endoplasmic reticulum</keyword>
<keyword id="KW-0445">Lipid transport</keyword>
<keyword id="KW-0446">Lipid-binding</keyword>
<keyword id="KW-0472">Membrane</keyword>
<keyword id="KW-1267">Proteomics identification</keyword>
<keyword id="KW-1185">Reference proteome</keyword>
<keyword id="KW-0812">Transmembrane</keyword>
<keyword id="KW-1133">Transmembrane helix</keyword>
<keyword id="KW-0813">Transport</keyword>